<reference key="1">
    <citation type="journal article" date="2008" name="BMC Genomics">
        <title>Complete genome of Phenylobacterium zucineum - a novel facultative intracellular bacterium isolated from human erythroleukemia cell line K562.</title>
        <authorList>
            <person name="Luo Y."/>
            <person name="Xu X."/>
            <person name="Ding Z."/>
            <person name="Liu Z."/>
            <person name="Zhang B."/>
            <person name="Yan Z."/>
            <person name="Sun J."/>
            <person name="Hu S."/>
            <person name="Hu X."/>
        </authorList>
    </citation>
    <scope>NUCLEOTIDE SEQUENCE [LARGE SCALE GENOMIC DNA]</scope>
    <source>
        <strain>HLK1</strain>
    </source>
</reference>
<name>MSCL_PHEZH</name>
<dbReference type="EMBL" id="CP000747">
    <property type="protein sequence ID" value="ACG76606.1"/>
    <property type="molecule type" value="Genomic_DNA"/>
</dbReference>
<dbReference type="RefSeq" id="WP_012520754.1">
    <property type="nucleotide sequence ID" value="NC_011144.1"/>
</dbReference>
<dbReference type="SMR" id="B4RCK7"/>
<dbReference type="STRING" id="450851.PHZ_c0192"/>
<dbReference type="KEGG" id="pzu:PHZ_c0192"/>
<dbReference type="eggNOG" id="COG1970">
    <property type="taxonomic scope" value="Bacteria"/>
</dbReference>
<dbReference type="HOGENOM" id="CLU_095787_0_0_5"/>
<dbReference type="OrthoDB" id="9810350at2"/>
<dbReference type="Proteomes" id="UP000001868">
    <property type="component" value="Chromosome"/>
</dbReference>
<dbReference type="GO" id="GO:0005886">
    <property type="term" value="C:plasma membrane"/>
    <property type="evidence" value="ECO:0007669"/>
    <property type="project" value="UniProtKB-SubCell"/>
</dbReference>
<dbReference type="GO" id="GO:0008381">
    <property type="term" value="F:mechanosensitive monoatomic ion channel activity"/>
    <property type="evidence" value="ECO:0007669"/>
    <property type="project" value="UniProtKB-UniRule"/>
</dbReference>
<dbReference type="FunFam" id="1.10.1200.120:FF:000001">
    <property type="entry name" value="Large-conductance mechanosensitive channel"/>
    <property type="match status" value="1"/>
</dbReference>
<dbReference type="Gene3D" id="1.10.1200.120">
    <property type="entry name" value="Large-conductance mechanosensitive channel, MscL, domain 1"/>
    <property type="match status" value="1"/>
</dbReference>
<dbReference type="HAMAP" id="MF_00115">
    <property type="entry name" value="MscL"/>
    <property type="match status" value="1"/>
</dbReference>
<dbReference type="InterPro" id="IPR019823">
    <property type="entry name" value="Mechanosensitive_channel_CS"/>
</dbReference>
<dbReference type="InterPro" id="IPR001185">
    <property type="entry name" value="MS_channel"/>
</dbReference>
<dbReference type="InterPro" id="IPR037673">
    <property type="entry name" value="MSC/AndL"/>
</dbReference>
<dbReference type="InterPro" id="IPR036019">
    <property type="entry name" value="MscL_channel"/>
</dbReference>
<dbReference type="NCBIfam" id="TIGR00220">
    <property type="entry name" value="mscL"/>
    <property type="match status" value="1"/>
</dbReference>
<dbReference type="NCBIfam" id="NF001843">
    <property type="entry name" value="PRK00567.1-4"/>
    <property type="match status" value="1"/>
</dbReference>
<dbReference type="PANTHER" id="PTHR30266:SF2">
    <property type="entry name" value="LARGE-CONDUCTANCE MECHANOSENSITIVE CHANNEL"/>
    <property type="match status" value="1"/>
</dbReference>
<dbReference type="PANTHER" id="PTHR30266">
    <property type="entry name" value="MECHANOSENSITIVE CHANNEL MSCL"/>
    <property type="match status" value="1"/>
</dbReference>
<dbReference type="Pfam" id="PF01741">
    <property type="entry name" value="MscL"/>
    <property type="match status" value="1"/>
</dbReference>
<dbReference type="PRINTS" id="PR01264">
    <property type="entry name" value="MECHCHANNEL"/>
</dbReference>
<dbReference type="SUPFAM" id="SSF81330">
    <property type="entry name" value="Gated mechanosensitive channel"/>
    <property type="match status" value="1"/>
</dbReference>
<dbReference type="PROSITE" id="PS01327">
    <property type="entry name" value="MSCL"/>
    <property type="match status" value="1"/>
</dbReference>
<sequence>MSIISEFREFIARGNVIDLAVGVIIGAAFNDIVKALVDNIVMPPIGLVLSGIDFSDLAWVLKPDDPATPALDAVAIQYGAFINTCIRFLIVAWAVFMLVKLVNVIRRREAEKPPEEKPAPTPQETLLMEIRDLLKRRAD</sequence>
<gene>
    <name evidence="1" type="primary">mscL</name>
    <name type="ordered locus">PHZ_c0192</name>
</gene>
<accession>B4RCK7</accession>
<keyword id="KW-0997">Cell inner membrane</keyword>
<keyword id="KW-1003">Cell membrane</keyword>
<keyword id="KW-0407">Ion channel</keyword>
<keyword id="KW-0406">Ion transport</keyword>
<keyword id="KW-0472">Membrane</keyword>
<keyword id="KW-1185">Reference proteome</keyword>
<keyword id="KW-0812">Transmembrane</keyword>
<keyword id="KW-1133">Transmembrane helix</keyword>
<keyword id="KW-0813">Transport</keyword>
<protein>
    <recommendedName>
        <fullName evidence="1">Large-conductance mechanosensitive channel</fullName>
    </recommendedName>
</protein>
<comment type="function">
    <text evidence="1">Channel that opens in response to stretch forces in the membrane lipid bilayer. May participate in the regulation of osmotic pressure changes within the cell.</text>
</comment>
<comment type="subunit">
    <text evidence="1">Homopentamer.</text>
</comment>
<comment type="subcellular location">
    <subcellularLocation>
        <location evidence="1">Cell inner membrane</location>
        <topology evidence="1">Multi-pass membrane protein</topology>
    </subcellularLocation>
</comment>
<comment type="similarity">
    <text evidence="1">Belongs to the MscL family.</text>
</comment>
<proteinExistence type="inferred from homology"/>
<feature type="chain" id="PRO_1000094911" description="Large-conductance mechanosensitive channel">
    <location>
        <begin position="1"/>
        <end position="139"/>
    </location>
</feature>
<feature type="transmembrane region" description="Helical" evidence="1">
    <location>
        <begin position="16"/>
        <end position="36"/>
    </location>
</feature>
<feature type="transmembrane region" description="Helical" evidence="1">
    <location>
        <begin position="40"/>
        <end position="60"/>
    </location>
</feature>
<feature type="transmembrane region" description="Helical" evidence="1">
    <location>
        <begin position="79"/>
        <end position="99"/>
    </location>
</feature>
<organism>
    <name type="scientific">Phenylobacterium zucineum (strain HLK1)</name>
    <dbReference type="NCBI Taxonomy" id="450851"/>
    <lineage>
        <taxon>Bacteria</taxon>
        <taxon>Pseudomonadati</taxon>
        <taxon>Pseudomonadota</taxon>
        <taxon>Alphaproteobacteria</taxon>
        <taxon>Caulobacterales</taxon>
        <taxon>Caulobacteraceae</taxon>
        <taxon>Phenylobacterium</taxon>
    </lineage>
</organism>
<evidence type="ECO:0000255" key="1">
    <source>
        <dbReference type="HAMAP-Rule" id="MF_00115"/>
    </source>
</evidence>